<gene>
    <name type="primary">lsrD</name>
    <name type="ordered locus">YPO0410</name>
    <name type="ordered locus">y3771</name>
    <name type="ordered locus">YP_3771</name>
</gene>
<sequence>MNLYRRYGWELTLAALLVLEILLFGLSNSRMLDINVLLFSTSDFICIGIVALPLTMVIVSGGIDISFGSTIGLCAIFLGIVFQAGVPMSVAIPLTVLVGALCGLINAGLILYTGVNPLVITLGTLYLFGGSALLLSGLSGATGYEGIGGFPAAFTDFANQTLFGLPIPLVIFMLCVLLFWLLMHRTHSGRHVFLIGQSSRVARYSALPIARTLCMLYAMTGVASAISAILLVSYFGSARSDLGASFLMPAITAVVLGGANIYGGSGSILGTALAVLLVGYLQQGLQMIGTPNQISSALSGALLILVVVGRSISLHRHLIYEWLQRRRSRKASA</sequence>
<proteinExistence type="inferred from homology"/>
<evidence type="ECO:0000250" key="1"/>
<evidence type="ECO:0000255" key="2"/>
<evidence type="ECO:0000305" key="3"/>
<dbReference type="EMBL" id="AE009952">
    <property type="protein sequence ID" value="AAM87316.1"/>
    <property type="molecule type" value="Genomic_DNA"/>
</dbReference>
<dbReference type="EMBL" id="AE017042">
    <property type="protein sequence ID" value="AAS63919.1"/>
    <property type="molecule type" value="Genomic_DNA"/>
</dbReference>
<dbReference type="EMBL" id="AL590842">
    <property type="protein sequence ID" value="CAL19091.1"/>
    <property type="molecule type" value="Genomic_DNA"/>
</dbReference>
<dbReference type="PIR" id="AI0050">
    <property type="entry name" value="AI0050"/>
</dbReference>
<dbReference type="RefSeq" id="WP_002209190.1">
    <property type="nucleotide sequence ID" value="NZ_WUCM01000002.1"/>
</dbReference>
<dbReference type="RefSeq" id="YP_002345487.1">
    <property type="nucleotide sequence ID" value="NC_003143.1"/>
</dbReference>
<dbReference type="STRING" id="214092.YPO0410"/>
<dbReference type="PaxDb" id="214092-YPO0410"/>
<dbReference type="EnsemblBacteria" id="AAS63919">
    <property type="protein sequence ID" value="AAS63919"/>
    <property type="gene ID" value="YP_3771"/>
</dbReference>
<dbReference type="GeneID" id="57974200"/>
<dbReference type="KEGG" id="ype:YPO0410"/>
<dbReference type="KEGG" id="ypk:y3771"/>
<dbReference type="KEGG" id="ypm:YP_3771"/>
<dbReference type="PATRIC" id="fig|214092.21.peg.650"/>
<dbReference type="eggNOG" id="COG1172">
    <property type="taxonomic scope" value="Bacteria"/>
</dbReference>
<dbReference type="HOGENOM" id="CLU_028880_0_0_6"/>
<dbReference type="OMA" id="NTVVFQF"/>
<dbReference type="OrthoDB" id="192433at2"/>
<dbReference type="Proteomes" id="UP000000815">
    <property type="component" value="Chromosome"/>
</dbReference>
<dbReference type="Proteomes" id="UP000001019">
    <property type="component" value="Chromosome"/>
</dbReference>
<dbReference type="Proteomes" id="UP000002490">
    <property type="component" value="Chromosome"/>
</dbReference>
<dbReference type="GO" id="GO:0005886">
    <property type="term" value="C:plasma membrane"/>
    <property type="evidence" value="ECO:0000318"/>
    <property type="project" value="GO_Central"/>
</dbReference>
<dbReference type="GO" id="GO:0022857">
    <property type="term" value="F:transmembrane transporter activity"/>
    <property type="evidence" value="ECO:0007669"/>
    <property type="project" value="InterPro"/>
</dbReference>
<dbReference type="CDD" id="cd06579">
    <property type="entry name" value="TM_PBP1_transp_AraH_like"/>
    <property type="match status" value="1"/>
</dbReference>
<dbReference type="InterPro" id="IPR001851">
    <property type="entry name" value="ABC_transp_permease"/>
</dbReference>
<dbReference type="NCBIfam" id="NF011612">
    <property type="entry name" value="PRK15038.1"/>
    <property type="match status" value="1"/>
</dbReference>
<dbReference type="PANTHER" id="PTHR32196">
    <property type="entry name" value="ABC TRANSPORTER PERMEASE PROTEIN YPHD-RELATED-RELATED"/>
    <property type="match status" value="1"/>
</dbReference>
<dbReference type="PANTHER" id="PTHR32196:SF71">
    <property type="entry name" value="AUTOINDUCER 2 IMPORT SYSTEM PERMEASE PROTEIN LSRD"/>
    <property type="match status" value="1"/>
</dbReference>
<dbReference type="Pfam" id="PF02653">
    <property type="entry name" value="BPD_transp_2"/>
    <property type="match status" value="1"/>
</dbReference>
<comment type="function">
    <text evidence="1">Part of the ABC transporter complex LsrABCD involved in autoinducer 2 (AI-2) import. Probably responsible for the translocation of the substrate across the membrane (By similarity).</text>
</comment>
<comment type="subunit">
    <text evidence="1">The complex is composed of two ATP-binding proteins (LsrA), two transmembrane proteins (LsrC and LsrD) and a solute-binding protein (LsrB).</text>
</comment>
<comment type="subcellular location">
    <subcellularLocation>
        <location evidence="1">Cell inner membrane</location>
        <topology evidence="1">Multi-pass membrane protein</topology>
    </subcellularLocation>
</comment>
<comment type="similarity">
    <text evidence="3">Belongs to the binding-protein-dependent transport system permease family. AraH/RbsC subfamily.</text>
</comment>
<feature type="chain" id="PRO_0000351380" description="Autoinducer 2 import system permease protein LsrD">
    <location>
        <begin position="1"/>
        <end position="333"/>
    </location>
</feature>
<feature type="transmembrane region" description="Helical" evidence="2">
    <location>
        <begin position="7"/>
        <end position="27"/>
    </location>
</feature>
<feature type="transmembrane region" description="Helical" evidence="2">
    <location>
        <begin position="45"/>
        <end position="65"/>
    </location>
</feature>
<feature type="transmembrane region" description="Helical" evidence="2">
    <location>
        <begin position="67"/>
        <end position="87"/>
    </location>
</feature>
<feature type="transmembrane region" description="Helical" evidence="2">
    <location>
        <begin position="90"/>
        <end position="110"/>
    </location>
</feature>
<feature type="transmembrane region" description="Helical" evidence="2">
    <location>
        <begin position="118"/>
        <end position="138"/>
    </location>
</feature>
<feature type="transmembrane region" description="Helical" evidence="2">
    <location>
        <begin position="162"/>
        <end position="182"/>
    </location>
</feature>
<feature type="transmembrane region" description="Helical" evidence="2">
    <location>
        <begin position="212"/>
        <end position="232"/>
    </location>
</feature>
<feature type="transmembrane region" description="Helical" evidence="2">
    <location>
        <begin position="240"/>
        <end position="260"/>
    </location>
</feature>
<feature type="transmembrane region" description="Helical" evidence="2">
    <location>
        <begin position="261"/>
        <end position="281"/>
    </location>
</feature>
<feature type="transmembrane region" description="Helical" evidence="2">
    <location>
        <begin position="288"/>
        <end position="308"/>
    </location>
</feature>
<accession>Q7CG48</accession>
<accession>Q74PW3</accession>
<organism>
    <name type="scientific">Yersinia pestis</name>
    <dbReference type="NCBI Taxonomy" id="632"/>
    <lineage>
        <taxon>Bacteria</taxon>
        <taxon>Pseudomonadati</taxon>
        <taxon>Pseudomonadota</taxon>
        <taxon>Gammaproteobacteria</taxon>
        <taxon>Enterobacterales</taxon>
        <taxon>Yersiniaceae</taxon>
        <taxon>Yersinia</taxon>
    </lineage>
</organism>
<reference key="1">
    <citation type="journal article" date="2002" name="J. Bacteriol.">
        <title>Genome sequence of Yersinia pestis KIM.</title>
        <authorList>
            <person name="Deng W."/>
            <person name="Burland V."/>
            <person name="Plunkett G. III"/>
            <person name="Boutin A."/>
            <person name="Mayhew G.F."/>
            <person name="Liss P."/>
            <person name="Perna N.T."/>
            <person name="Rose D.J."/>
            <person name="Mau B."/>
            <person name="Zhou S."/>
            <person name="Schwartz D.C."/>
            <person name="Fetherston J.D."/>
            <person name="Lindler L.E."/>
            <person name="Brubaker R.R."/>
            <person name="Plano G.V."/>
            <person name="Straley S.C."/>
            <person name="McDonough K.A."/>
            <person name="Nilles M.L."/>
            <person name="Matson J.S."/>
            <person name="Blattner F.R."/>
            <person name="Perry R.D."/>
        </authorList>
    </citation>
    <scope>NUCLEOTIDE SEQUENCE [LARGE SCALE GENOMIC DNA]</scope>
    <source>
        <strain>KIM10+ / Biovar Mediaevalis</strain>
    </source>
</reference>
<reference key="2">
    <citation type="journal article" date="2001" name="Nature">
        <title>Genome sequence of Yersinia pestis, the causative agent of plague.</title>
        <authorList>
            <person name="Parkhill J."/>
            <person name="Wren B.W."/>
            <person name="Thomson N.R."/>
            <person name="Titball R.W."/>
            <person name="Holden M.T.G."/>
            <person name="Prentice M.B."/>
            <person name="Sebaihia M."/>
            <person name="James K.D."/>
            <person name="Churcher C.M."/>
            <person name="Mungall K.L."/>
            <person name="Baker S."/>
            <person name="Basham D."/>
            <person name="Bentley S.D."/>
            <person name="Brooks K."/>
            <person name="Cerdeno-Tarraga A.-M."/>
            <person name="Chillingworth T."/>
            <person name="Cronin A."/>
            <person name="Davies R.M."/>
            <person name="Davis P."/>
            <person name="Dougan G."/>
            <person name="Feltwell T."/>
            <person name="Hamlin N."/>
            <person name="Holroyd S."/>
            <person name="Jagels K."/>
            <person name="Karlyshev A.V."/>
            <person name="Leather S."/>
            <person name="Moule S."/>
            <person name="Oyston P.C.F."/>
            <person name="Quail M.A."/>
            <person name="Rutherford K.M."/>
            <person name="Simmonds M."/>
            <person name="Skelton J."/>
            <person name="Stevens K."/>
            <person name="Whitehead S."/>
            <person name="Barrell B.G."/>
        </authorList>
    </citation>
    <scope>NUCLEOTIDE SEQUENCE [LARGE SCALE GENOMIC DNA]</scope>
    <source>
        <strain>CO-92 / Biovar Orientalis</strain>
    </source>
</reference>
<reference key="3">
    <citation type="journal article" date="2004" name="DNA Res.">
        <title>Complete genome sequence of Yersinia pestis strain 91001, an isolate avirulent to humans.</title>
        <authorList>
            <person name="Song Y."/>
            <person name="Tong Z."/>
            <person name="Wang J."/>
            <person name="Wang L."/>
            <person name="Guo Z."/>
            <person name="Han Y."/>
            <person name="Zhang J."/>
            <person name="Pei D."/>
            <person name="Zhou D."/>
            <person name="Qin H."/>
            <person name="Pang X."/>
            <person name="Han Y."/>
            <person name="Zhai J."/>
            <person name="Li M."/>
            <person name="Cui B."/>
            <person name="Qi Z."/>
            <person name="Jin L."/>
            <person name="Dai R."/>
            <person name="Chen F."/>
            <person name="Li S."/>
            <person name="Ye C."/>
            <person name="Du Z."/>
            <person name="Lin W."/>
            <person name="Wang J."/>
            <person name="Yu J."/>
            <person name="Yang H."/>
            <person name="Wang J."/>
            <person name="Huang P."/>
            <person name="Yang R."/>
        </authorList>
    </citation>
    <scope>NUCLEOTIDE SEQUENCE [LARGE SCALE GENOMIC DNA]</scope>
    <source>
        <strain>91001 / Biovar Mediaevalis</strain>
    </source>
</reference>
<name>LSRD_YERPE</name>
<keyword id="KW-0997">Cell inner membrane</keyword>
<keyword id="KW-1003">Cell membrane</keyword>
<keyword id="KW-0472">Membrane</keyword>
<keyword id="KW-1185">Reference proteome</keyword>
<keyword id="KW-0812">Transmembrane</keyword>
<keyword id="KW-1133">Transmembrane helix</keyword>
<keyword id="KW-0813">Transport</keyword>
<protein>
    <recommendedName>
        <fullName>Autoinducer 2 import system permease protein LsrD</fullName>
        <shortName>AI-2 import system permease protein LsrD</shortName>
    </recommendedName>
</protein>